<keyword id="KW-0002">3D-structure</keyword>
<keyword id="KW-0175">Coiled coil</keyword>
<keyword id="KW-0963">Cytoplasm</keyword>
<keyword id="KW-0206">Cytoskeleton</keyword>
<keyword id="KW-0242">Dwarfism</keyword>
<keyword id="KW-0597">Phosphoprotein</keyword>
<keyword id="KW-1267">Proteomics identification</keyword>
<keyword id="KW-1185">Reference proteome</keyword>
<protein>
    <recommendedName>
        <fullName>Coiled-coil domain-containing protein 8</fullName>
    </recommendedName>
</protein>
<reference key="1">
    <citation type="journal article" date="2001" name="Genome Res.">
        <title>Towards a catalog of human genes and proteins: sequencing and analysis of 500 novel complete protein coding human cDNAs.</title>
        <authorList>
            <person name="Wiemann S."/>
            <person name="Weil B."/>
            <person name="Wellenreuther R."/>
            <person name="Gassenhuber J."/>
            <person name="Glassl S."/>
            <person name="Ansorge W."/>
            <person name="Boecher M."/>
            <person name="Bloecker H."/>
            <person name="Bauersachs S."/>
            <person name="Blum H."/>
            <person name="Lauber J."/>
            <person name="Duesterhoeft A."/>
            <person name="Beyer A."/>
            <person name="Koehrer K."/>
            <person name="Strack N."/>
            <person name="Mewes H.-W."/>
            <person name="Ottenwaelder B."/>
            <person name="Obermaier B."/>
            <person name="Tampe J."/>
            <person name="Heubner D."/>
            <person name="Wambutt R."/>
            <person name="Korn B."/>
            <person name="Klein M."/>
            <person name="Poustka A."/>
        </authorList>
    </citation>
    <scope>NUCLEOTIDE SEQUENCE [LARGE SCALE MRNA]</scope>
    <source>
        <tissue>Brain</tissue>
    </source>
</reference>
<reference key="2">
    <citation type="journal article" date="2004" name="Genome Res.">
        <title>The status, quality, and expansion of the NIH full-length cDNA project: the Mammalian Gene Collection (MGC).</title>
        <authorList>
            <consortium name="The MGC Project Team"/>
        </authorList>
    </citation>
    <scope>NUCLEOTIDE SEQUENCE [LARGE SCALE MRNA]</scope>
    <source>
        <tissue>Uterus</tissue>
    </source>
</reference>
<reference key="3">
    <citation type="journal article" date="2009" name="Anal. Chem.">
        <title>Lys-N and trypsin cover complementary parts of the phosphoproteome in a refined SCX-based approach.</title>
        <authorList>
            <person name="Gauci S."/>
            <person name="Helbig A.O."/>
            <person name="Slijper M."/>
            <person name="Krijgsveld J."/>
            <person name="Heck A.J."/>
            <person name="Mohammed S."/>
        </authorList>
    </citation>
    <scope>IDENTIFICATION BY MASS SPECTROMETRY [LARGE SCALE ANALYSIS]</scope>
</reference>
<reference key="4">
    <citation type="journal article" date="2011" name="Am. J. Hum. Genet.">
        <title>Exome sequencing identifies CCDC8 mutations in 3-M syndrome, Suggesting that CCDC8 Contributes in a Pathway with CUL7 and OBSL1 to Control Human Growth.</title>
        <authorList>
            <person name="Hanson D."/>
            <person name="Murray P.G."/>
            <person name="O'Sullivan J."/>
            <person name="Urquhart J."/>
            <person name="Daly S."/>
            <person name="Bhaskar S.S."/>
            <person name="Biesecker L.G."/>
            <person name="Skae M."/>
            <person name="Smith C."/>
            <person name="Cole T."/>
            <person name="Kirk J."/>
            <person name="Chandler K."/>
            <person name="Kingston H."/>
            <person name="Donnai D."/>
            <person name="Clayton P.E."/>
            <person name="Black G.C."/>
        </authorList>
    </citation>
    <scope>INTERACTION WITH OBSL1</scope>
    <scope>TISSUE SPECIFICITY</scope>
    <scope>INVOLVEMENT IN 3M3</scope>
</reference>
<reference key="5">
    <citation type="journal article" date="2011" name="Sci. Signal.">
        <title>System-wide temporal characterization of the proteome and phosphoproteome of human embryonic stem cell differentiation.</title>
        <authorList>
            <person name="Rigbolt K.T."/>
            <person name="Prokhorova T.A."/>
            <person name="Akimov V."/>
            <person name="Henningsen J."/>
            <person name="Johansen P.T."/>
            <person name="Kratchmarova I."/>
            <person name="Kassem M."/>
            <person name="Mann M."/>
            <person name="Olsen J.V."/>
            <person name="Blagoev B."/>
        </authorList>
    </citation>
    <scope>PHOSPHORYLATION [LARGE SCALE ANALYSIS] AT SER-142 AND SER-146</scope>
    <scope>IDENTIFICATION BY MASS SPECTROMETRY [LARGE SCALE ANALYSIS]</scope>
</reference>
<reference key="6">
    <citation type="journal article" date="2012" name="J. Mol. Endocrinol.">
        <title>Mutations in CUL7, OBSL1 and CCDC8 in 3-M syndrome lead to disordered growth factor signalling.</title>
        <authorList>
            <person name="Hanson D."/>
            <person name="Murray P.G."/>
            <person name="Coulson T."/>
            <person name="Sud A."/>
            <person name="Omokanye A."/>
            <person name="Stratta E."/>
            <person name="Sakhinia F."/>
            <person name="Bonshek C."/>
            <person name="Wilson L.C."/>
            <person name="Wakeling E."/>
            <person name="Temtamy S.A."/>
            <person name="Aglan M."/>
            <person name="Rosser E.M."/>
            <person name="Mansour S."/>
            <person name="Carcavilla A."/>
            <person name="Nampoothiri S."/>
            <person name="Khan W.I."/>
            <person name="Banerjee I."/>
            <person name="Chandler K.E."/>
            <person name="Black G.C."/>
            <person name="Clayton P.E."/>
        </authorList>
    </citation>
    <scope>INVOLVEMENT IN 3M3</scope>
</reference>
<reference key="7">
    <citation type="journal article" date="2013" name="J. Proteome Res.">
        <title>Toward a comprehensive characterization of a human cancer cell phosphoproteome.</title>
        <authorList>
            <person name="Zhou H."/>
            <person name="Di Palma S."/>
            <person name="Preisinger C."/>
            <person name="Peng M."/>
            <person name="Polat A.N."/>
            <person name="Heck A.J."/>
            <person name="Mohammed S."/>
        </authorList>
    </citation>
    <scope>PHOSPHORYLATION [LARGE SCALE ANALYSIS] AT SER-261</scope>
    <scope>IDENTIFICATION BY MASS SPECTROMETRY [LARGE SCALE ANALYSIS]</scope>
    <source>
        <tissue>Erythroleukemia</tissue>
    </source>
</reference>
<reference key="8">
    <citation type="journal article" date="2014" name="J. Proteomics">
        <title>An enzyme assisted RP-RPLC approach for in-depth analysis of human liver phosphoproteome.</title>
        <authorList>
            <person name="Bian Y."/>
            <person name="Song C."/>
            <person name="Cheng K."/>
            <person name="Dong M."/>
            <person name="Wang F."/>
            <person name="Huang J."/>
            <person name="Sun D."/>
            <person name="Wang L."/>
            <person name="Ye M."/>
            <person name="Zou H."/>
        </authorList>
    </citation>
    <scope>PHOSPHORYLATION [LARGE SCALE ANALYSIS] AT SER-261</scope>
    <scope>IDENTIFICATION BY MASS SPECTROMETRY [LARGE SCALE ANALYSIS]</scope>
    <source>
        <tissue>Liver</tissue>
    </source>
</reference>
<reference key="9">
    <citation type="journal article" date="2014" name="Mol. Cell">
        <title>The 3M complex maintains microtubule and genome integrity.</title>
        <authorList>
            <person name="Yan J."/>
            <person name="Yan F."/>
            <person name="Li Z."/>
            <person name="Sinnott B."/>
            <person name="Cappell K.M."/>
            <person name="Yu Y."/>
            <person name="Mo J."/>
            <person name="Duncan J.A."/>
            <person name="Chen X."/>
            <person name="Cormier-Daire V."/>
            <person name="Whitehurst A.W."/>
            <person name="Xiong Y."/>
        </authorList>
    </citation>
    <scope>FUNCTION</scope>
    <scope>IDENTIFICATION IN THE 3M COMPLEX</scope>
    <scope>SUBCELLULAR LOCATION</scope>
</reference>
<reference key="10">
    <citation type="journal article" date="2014" name="Mol. Cell">
        <title>CUL9 mediates the functions of the 3M complex and ubiquitylates survivin to maintain genome integrity.</title>
        <authorList>
            <person name="Li Z."/>
            <person name="Pei X.H."/>
            <person name="Yan J."/>
            <person name="Yan F."/>
            <person name="Cappell K.M."/>
            <person name="Whitehurst A.W."/>
            <person name="Xiong Y."/>
        </authorList>
    </citation>
    <scope>FUNCTION</scope>
</reference>
<reference key="11">
    <citation type="journal article" date="2015" name="Structure">
        <title>Ankyrin repeats of ANKRA2 recognize a PxLPxL motif on the 3M syndrome protein CCDC8.</title>
        <authorList>
            <person name="Nie J."/>
            <person name="Xu C."/>
            <person name="Jin J."/>
            <person name="Aka J.A."/>
            <person name="Tempel W."/>
            <person name="Nguyen V."/>
            <person name="You L."/>
            <person name="Weist R."/>
            <person name="Min J."/>
            <person name="Pawson T."/>
            <person name="Yang X.J."/>
        </authorList>
    </citation>
    <scope>X-RAY CRYSTALLOGRAPHY (1.80 ANGSTROMS) OF 494-510 IN COMPLEX WITH ANKRA2</scope>
    <scope>INTERACTION WITH ANKRA2</scope>
    <scope>MUTAGENESIS OF PRO-503 AND THR-504</scope>
    <scope>MOTIF</scope>
</reference>
<comment type="function">
    <text evidence="5 6">Core component of the 3M complex, a complex required to regulate microtubule dynamics and genome integrity. It is unclear how the 3M complex regulates microtubules, it could act by controlling the level of a microtubule stabilizer (PubMed:24793695, PubMed:24793696). Required for localization of CUL7 to the centrosome (PubMed:24793695).</text>
</comment>
<comment type="subunit">
    <text evidence="3 5 7">Component of the 3M complex, composed of core components CUL7, CCDC8 and OBSL1 (PubMed:21737058, PubMed:24793695). Interacts (via PxLPxI/L motif) with ANKRA2 (via ankyrin repeats); may link the 3M complex to histone deacetylases including HDAC4 and HDAC5 (PubMed:25752541).</text>
</comment>
<comment type="interaction">
    <interactant intactId="EBI-5236005">
        <id>Q9H0W5</id>
    </interactant>
    <interactant intactId="EBI-10215533">
        <id>Q9H9E1</id>
        <label>ANKRA2</label>
    </interactant>
    <organismsDiffer>false</organismsDiffer>
    <experiments>4</experiments>
</comment>
<comment type="subcellular location">
    <subcellularLocation>
        <location evidence="5">Cytoplasm</location>
    </subcellularLocation>
    <subcellularLocation>
        <location evidence="5">Cytoplasm</location>
        <location evidence="5">Cytoskeleton</location>
        <location evidence="5">Microtubule organizing center</location>
        <location evidence="5">Centrosome</location>
    </subcellularLocation>
</comment>
<comment type="tissue specificity">
    <text evidence="3">Widely expressed with low levels in spleen, skeletal muscle, small intestine, kidney and liver.</text>
</comment>
<comment type="domain">
    <text evidence="7">The PxLPxI/L motif mediates interaction with ankyrin repeats of ANKRA2.</text>
</comment>
<comment type="disease" evidence="3 4">
    <disease id="DI-03220">
        <name>3M syndrome 3</name>
        <acronym>3M3</acronym>
        <description>A disorder characterized by poor postnatal growth and distinctive facial features, including triangular facies, frontal bossing, fleshy tipped nose, and fleshy lips. Other features may include skeletal anomalies and prominent heels.</description>
        <dbReference type="MIM" id="614205"/>
    </disease>
    <text>The disease is caused by variants affecting the gene represented in this entry.</text>
</comment>
<gene>
    <name type="primary">CCDC8</name>
</gene>
<sequence>MLQIGEDVDYLLIPREVRLAGGVWRVISKPATKEAEFRERLTQFLEEEGRTLEDVARIMEKSTPHPPQPPKKPKEPRVRRRVQQMVTPPPRLVVGTYDSSNASDSEFSDFETSRDKSRQGPRRGKKVRKMPVSYLGSKFLGSDLESEDDEELVEAFLRRQEKQPSAPPARRRVNLPVPMFEDNLGPQLSKADRWREYVSQVSWGKLKRRVKGWAPRAGPGVGEARLASTAVESAGVSSAPEGTSPGDRLGNAGDVCVPQASPRRWRPKINWASFRRRRKEQTAPTGQGADIEADQGGEAADSQREEAIADQREGAAGNQRAGAPADQGAEAADNQREEAADNQRAGAPAEEGAEAADNQREEAADNQRAEAPADQRSQGTDNHREEAADNQRAEAPADQGSEVTDNQREEAVHDQRERAPAVQGADNQRAQARAGQRAEAAHNQRAGAPGIQEAEVSAAQGTTGTAPGARARKQVKTVRFQTPGRFSWFCKRRRAFWHTPRLPTLPKRVPRAGEARNLRVLRAEARAEAEQGEQEDQL</sequence>
<feature type="chain" id="PRO_0000089401" description="Coiled-coil domain-containing protein 8">
    <location>
        <begin position="1"/>
        <end position="538"/>
    </location>
</feature>
<feature type="region of interest" description="Disordered" evidence="2">
    <location>
        <begin position="58"/>
        <end position="128"/>
    </location>
</feature>
<feature type="region of interest" description="Disordered" evidence="2">
    <location>
        <begin position="213"/>
        <end position="473"/>
    </location>
</feature>
<feature type="coiled-coil region" evidence="1">
    <location>
        <begin position="349"/>
        <end position="366"/>
    </location>
</feature>
<feature type="coiled-coil region" evidence="1">
    <location>
        <begin position="514"/>
        <end position="535"/>
    </location>
</feature>
<feature type="short sequence motif" description="PxLPxI/L motif; mediates interaction with ANKRA2" evidence="7">
    <location>
        <begin position="500"/>
        <end position="506"/>
    </location>
</feature>
<feature type="compositionally biased region" description="Basic residues" evidence="2">
    <location>
        <begin position="119"/>
        <end position="128"/>
    </location>
</feature>
<feature type="compositionally biased region" description="Basic and acidic residues" evidence="2">
    <location>
        <begin position="301"/>
        <end position="313"/>
    </location>
</feature>
<feature type="compositionally biased region" description="Low complexity" evidence="2">
    <location>
        <begin position="321"/>
        <end position="332"/>
    </location>
</feature>
<feature type="compositionally biased region" description="Basic and acidic residues" evidence="2">
    <location>
        <begin position="357"/>
        <end position="373"/>
    </location>
</feature>
<feature type="compositionally biased region" description="Basic and acidic residues" evidence="2">
    <location>
        <begin position="381"/>
        <end position="392"/>
    </location>
</feature>
<feature type="compositionally biased region" description="Basic and acidic residues" evidence="2">
    <location>
        <begin position="405"/>
        <end position="419"/>
    </location>
</feature>
<feature type="compositionally biased region" description="Low complexity" evidence="2">
    <location>
        <begin position="428"/>
        <end position="438"/>
    </location>
</feature>
<feature type="compositionally biased region" description="Low complexity" evidence="2">
    <location>
        <begin position="458"/>
        <end position="469"/>
    </location>
</feature>
<feature type="modified residue" description="Phosphoserine" evidence="9">
    <location>
        <position position="142"/>
    </location>
</feature>
<feature type="modified residue" description="Phosphoserine" evidence="9">
    <location>
        <position position="146"/>
    </location>
</feature>
<feature type="modified residue" description="Phosphoserine" evidence="10 11">
    <location>
        <position position="261"/>
    </location>
</feature>
<feature type="sequence variant" id="VAR_061587" description="In dbSNP:rs11880658.">
    <original>G</original>
    <variation>R</variation>
    <location>
        <position position="296"/>
    </location>
</feature>
<feature type="sequence variant" id="VAR_061588" description="In dbSNP:rs34186470.">
    <original>H</original>
    <variation>Y</variation>
    <location>
        <position position="383"/>
    </location>
</feature>
<feature type="sequence variant" id="VAR_020272" description="In dbSNP:rs2279517.">
    <original>K</original>
    <variation>N</variation>
    <location>
        <position position="507"/>
    </location>
</feature>
<feature type="mutagenesis site" description="Decreased interaction with ANKRA2." evidence="7">
    <original>P</original>
    <variation>A</variation>
    <location>
        <position position="503"/>
    </location>
</feature>
<feature type="mutagenesis site" description="Decreased interaction with ANKRA2." evidence="7">
    <original>T</original>
    <variation>A</variation>
    <location>
        <position position="504"/>
    </location>
</feature>
<feature type="sequence conflict" description="In Ref. 1; CAB66544." evidence="8" ref="1">
    <original>A</original>
    <variation>V</variation>
    <location>
        <position position="515"/>
    </location>
</feature>
<dbReference type="EMBL" id="AL136609">
    <property type="protein sequence ID" value="CAB66544.1"/>
    <property type="molecule type" value="mRNA"/>
</dbReference>
<dbReference type="EMBL" id="BC025243">
    <property type="protein sequence ID" value="AAH25243.1"/>
    <property type="molecule type" value="mRNA"/>
</dbReference>
<dbReference type="CCDS" id="CCDS12685.1"/>
<dbReference type="RefSeq" id="NP_114429.2">
    <property type="nucleotide sequence ID" value="NM_032040.5"/>
</dbReference>
<dbReference type="PDB" id="4LG6">
    <property type="method" value="X-ray"/>
    <property type="resolution" value="1.80 A"/>
    <property type="chains" value="B=494-510"/>
</dbReference>
<dbReference type="PDBsum" id="4LG6"/>
<dbReference type="SMR" id="Q9H0W5"/>
<dbReference type="BioGRID" id="123838">
    <property type="interactions" value="665"/>
</dbReference>
<dbReference type="ComplexPortal" id="CPX-2838">
    <property type="entry name" value="3M complex"/>
</dbReference>
<dbReference type="CORUM" id="Q9H0W5"/>
<dbReference type="DIP" id="DIP-60183N"/>
<dbReference type="ELM" id="Q9H0W5"/>
<dbReference type="FunCoup" id="Q9H0W5">
    <property type="interactions" value="670"/>
</dbReference>
<dbReference type="IntAct" id="Q9H0W5">
    <property type="interactions" value="48"/>
</dbReference>
<dbReference type="MINT" id="Q9H0W5"/>
<dbReference type="STRING" id="9606.ENSP00000303158"/>
<dbReference type="CarbonylDB" id="Q9H0W5"/>
<dbReference type="GlyGen" id="Q9H0W5">
    <property type="glycosylation" value="1 site"/>
</dbReference>
<dbReference type="iPTMnet" id="Q9H0W5"/>
<dbReference type="PhosphoSitePlus" id="Q9H0W5"/>
<dbReference type="BioMuta" id="CCDC8"/>
<dbReference type="DMDM" id="116241287"/>
<dbReference type="jPOST" id="Q9H0W5"/>
<dbReference type="MassIVE" id="Q9H0W5"/>
<dbReference type="PaxDb" id="9606-ENSP00000303158"/>
<dbReference type="PeptideAtlas" id="Q9H0W5"/>
<dbReference type="ProteomicsDB" id="80331"/>
<dbReference type="Pumba" id="Q9H0W5"/>
<dbReference type="Antibodypedia" id="31453">
    <property type="antibodies" value="146 antibodies from 22 providers"/>
</dbReference>
<dbReference type="DNASU" id="83987"/>
<dbReference type="Ensembl" id="ENST00000307522.5">
    <property type="protein sequence ID" value="ENSP00000303158.3"/>
    <property type="gene ID" value="ENSG00000169515.9"/>
</dbReference>
<dbReference type="GeneID" id="83987"/>
<dbReference type="KEGG" id="hsa:83987"/>
<dbReference type="MANE-Select" id="ENST00000307522.5">
    <property type="protein sequence ID" value="ENSP00000303158.3"/>
    <property type="RefSeq nucleotide sequence ID" value="NM_032040.5"/>
    <property type="RefSeq protein sequence ID" value="NP_114429.2"/>
</dbReference>
<dbReference type="UCSC" id="uc002pep.4">
    <property type="organism name" value="human"/>
</dbReference>
<dbReference type="AGR" id="HGNC:25367"/>
<dbReference type="CTD" id="83987"/>
<dbReference type="DisGeNET" id="83987"/>
<dbReference type="GeneCards" id="CCDC8"/>
<dbReference type="GeneReviews" id="CCDC8"/>
<dbReference type="HGNC" id="HGNC:25367">
    <property type="gene designation" value="CCDC8"/>
</dbReference>
<dbReference type="HPA" id="ENSG00000169515">
    <property type="expression patterns" value="Tissue enhanced (ovary)"/>
</dbReference>
<dbReference type="MalaCards" id="CCDC8"/>
<dbReference type="MIM" id="614145">
    <property type="type" value="gene"/>
</dbReference>
<dbReference type="MIM" id="614205">
    <property type="type" value="phenotype"/>
</dbReference>
<dbReference type="neXtProt" id="NX_Q9H0W5"/>
<dbReference type="OpenTargets" id="ENSG00000169515"/>
<dbReference type="Orphanet" id="2616">
    <property type="disease" value="3M syndrome"/>
</dbReference>
<dbReference type="PharmGKB" id="PA134931534"/>
<dbReference type="VEuPathDB" id="HostDB:ENSG00000169515"/>
<dbReference type="eggNOG" id="ENOG502S9UD">
    <property type="taxonomic scope" value="Eukaryota"/>
</dbReference>
<dbReference type="GeneTree" id="ENSGT01030000234522"/>
<dbReference type="HOGENOM" id="CLU_025577_0_0_1"/>
<dbReference type="InParanoid" id="Q9H0W5"/>
<dbReference type="OMA" id="RRRVPQM"/>
<dbReference type="OrthoDB" id="9633677at2759"/>
<dbReference type="PAN-GO" id="Q9H0W5">
    <property type="GO annotations" value="3 GO annotations based on evolutionary models"/>
</dbReference>
<dbReference type="PhylomeDB" id="Q9H0W5"/>
<dbReference type="TreeFam" id="TF335054"/>
<dbReference type="PathwayCommons" id="Q9H0W5"/>
<dbReference type="Reactome" id="R-HSA-8951664">
    <property type="pathway name" value="Neddylation"/>
</dbReference>
<dbReference type="SignaLink" id="Q9H0W5"/>
<dbReference type="BioGRID-ORCS" id="83987">
    <property type="hits" value="9 hits in 1154 CRISPR screens"/>
</dbReference>
<dbReference type="EvolutionaryTrace" id="Q9H0W5"/>
<dbReference type="GeneWiki" id="CCDC8"/>
<dbReference type="GenomeRNAi" id="83987"/>
<dbReference type="Pharos" id="Q9H0W5">
    <property type="development level" value="Tbio"/>
</dbReference>
<dbReference type="PRO" id="PR:Q9H0W5"/>
<dbReference type="Proteomes" id="UP000005640">
    <property type="component" value="Chromosome 19"/>
</dbReference>
<dbReference type="RNAct" id="Q9H0W5">
    <property type="molecule type" value="protein"/>
</dbReference>
<dbReference type="Bgee" id="ENSG00000169515">
    <property type="expression patterns" value="Expressed in kidney epithelium and 163 other cell types or tissues"/>
</dbReference>
<dbReference type="GO" id="GO:1990393">
    <property type="term" value="C:3M complex"/>
    <property type="evidence" value="ECO:0000314"/>
    <property type="project" value="UniProtKB"/>
</dbReference>
<dbReference type="GO" id="GO:0005813">
    <property type="term" value="C:centrosome"/>
    <property type="evidence" value="ECO:0000314"/>
    <property type="project" value="UniProtKB"/>
</dbReference>
<dbReference type="GO" id="GO:0005737">
    <property type="term" value="C:cytoplasm"/>
    <property type="evidence" value="ECO:0000314"/>
    <property type="project" value="UniProtKB"/>
</dbReference>
<dbReference type="GO" id="GO:0005829">
    <property type="term" value="C:cytosol"/>
    <property type="evidence" value="ECO:0000314"/>
    <property type="project" value="HPA"/>
</dbReference>
<dbReference type="GO" id="GO:0005654">
    <property type="term" value="C:nucleoplasm"/>
    <property type="evidence" value="ECO:0000314"/>
    <property type="project" value="HPA"/>
</dbReference>
<dbReference type="GO" id="GO:0005886">
    <property type="term" value="C:plasma membrane"/>
    <property type="evidence" value="ECO:0000314"/>
    <property type="project" value="LIFEdb"/>
</dbReference>
<dbReference type="GO" id="GO:0000226">
    <property type="term" value="P:microtubule cytoskeleton organization"/>
    <property type="evidence" value="ECO:0000315"/>
    <property type="project" value="UniProtKB"/>
</dbReference>
<dbReference type="GO" id="GO:0007088">
    <property type="term" value="P:regulation of mitotic nuclear division"/>
    <property type="evidence" value="ECO:0000315"/>
    <property type="project" value="UniProtKB"/>
</dbReference>
<dbReference type="IDEAL" id="IID00736"/>
<dbReference type="InterPro" id="IPR026526">
    <property type="entry name" value="Coiled-coil_p8"/>
</dbReference>
<dbReference type="PANTHER" id="PTHR47741">
    <property type="entry name" value="COILED COIL DOMAIN-CONTAINING PROTEIN 8, CCDC8"/>
    <property type="match status" value="1"/>
</dbReference>
<dbReference type="PANTHER" id="PTHR47741:SF1">
    <property type="entry name" value="COILED-COIL DOMAIN-CONTAINING PROTEIN 8"/>
    <property type="match status" value="1"/>
</dbReference>
<accession>Q9H0W5</accession>
<accession>Q8TB26</accession>
<name>CCDC8_HUMAN</name>
<proteinExistence type="evidence at protein level"/>
<evidence type="ECO:0000255" key="1"/>
<evidence type="ECO:0000256" key="2">
    <source>
        <dbReference type="SAM" id="MobiDB-lite"/>
    </source>
</evidence>
<evidence type="ECO:0000269" key="3">
    <source>
    </source>
</evidence>
<evidence type="ECO:0000269" key="4">
    <source>
    </source>
</evidence>
<evidence type="ECO:0000269" key="5">
    <source>
    </source>
</evidence>
<evidence type="ECO:0000269" key="6">
    <source>
    </source>
</evidence>
<evidence type="ECO:0000269" key="7">
    <source>
    </source>
</evidence>
<evidence type="ECO:0000305" key="8"/>
<evidence type="ECO:0007744" key="9">
    <source>
    </source>
</evidence>
<evidence type="ECO:0007744" key="10">
    <source>
    </source>
</evidence>
<evidence type="ECO:0007744" key="11">
    <source>
    </source>
</evidence>
<organism>
    <name type="scientific">Homo sapiens</name>
    <name type="common">Human</name>
    <dbReference type="NCBI Taxonomy" id="9606"/>
    <lineage>
        <taxon>Eukaryota</taxon>
        <taxon>Metazoa</taxon>
        <taxon>Chordata</taxon>
        <taxon>Craniata</taxon>
        <taxon>Vertebrata</taxon>
        <taxon>Euteleostomi</taxon>
        <taxon>Mammalia</taxon>
        <taxon>Eutheria</taxon>
        <taxon>Euarchontoglires</taxon>
        <taxon>Primates</taxon>
        <taxon>Haplorrhini</taxon>
        <taxon>Catarrhini</taxon>
        <taxon>Hominidae</taxon>
        <taxon>Homo</taxon>
    </lineage>
</organism>